<proteinExistence type="evidence at transcript level"/>
<sequence>MSPSRSEPLIDNLVDRSNLKIVALASPADGHTFPLLRIVEELVLRGYDVTFLASEDYRARTAAVGAYFVPVPPYDDIQRITTELSVIADPGERMNAAMIELFITPTAGRMATLYAALEDVKREKPLHKVVLLTESFFLGDHPLFLGAPLPKGFTRRPRAINIHACSYGLSSVDSAPFGLTIIPDGTAESREKYRKLHSDMLTGSLAESVALQKKVLTELGATNMDEVEGRNPLDVIATTADVTLQMCPPSLEYRRSDIHPKVRFIGALPPRAPPKTFSAPPFWNTVINGSKRVVVVSQGTVAVRYDQLLVPAMHALADRDDIVVVAILGQKGAELPGEVAIPSNAYTVDYLSYDAMLPYASVFVLNAGYGGFMHGIVNGVPMVLAGGSEDKPEVANRGEFAGVGINLRTGTPSQRQIRQGVDEILSNPKYKRRVKEIQLENEKMKAMDSVEKEILKWAAMD</sequence>
<reference key="1">
    <citation type="journal article" date="2012" name="Sci. Rep.">
        <title>Genomic perspectives on the evolution of fungal entomopathogenicity in Beauveria bassiana.</title>
        <authorList>
            <person name="Xiao G."/>
            <person name="Ying S.-H."/>
            <person name="Zheng P."/>
            <person name="Wang Z.-L."/>
            <person name="Zhang S."/>
            <person name="Xie X.-Q."/>
            <person name="Shang Y."/>
            <person name="St Leger R.J."/>
            <person name="Zhao G.-P."/>
            <person name="Wang C."/>
            <person name="Feng M.-G."/>
        </authorList>
    </citation>
    <scope>NUCLEOTIDE SEQUENCE [LARGE SCALE GENOMIC DNA]</scope>
    <source>
        <strain>ARSEF 2860</strain>
    </source>
</reference>
<reference key="2">
    <citation type="journal article" date="2021" name="MBio">
        <title>Inductive production of the iron-chelating 2-pyridones benefits the producing fungus to compete for diverse niches.</title>
        <authorList>
            <person name="Chen B."/>
            <person name="Sun Y."/>
            <person name="Li S."/>
            <person name="Yin Y."/>
            <person name="Wang C."/>
        </authorList>
    </citation>
    <scope>FUNCTION</scope>
    <scope>DISRUPTION PHENOTYPE</scope>
    <scope>INDUCTION</scope>
    <scope>PATHWAY</scope>
</reference>
<accession>J4VV61</accession>
<feature type="chain" id="PRO_0000455690" description="UDP-glucosyltransferase 1">
    <location>
        <begin position="1"/>
        <end position="461"/>
    </location>
</feature>
<gene>
    <name type="ORF">BBA_08686</name>
</gene>
<protein>
    <recommendedName>
        <fullName evidence="2">UDP-glucosyltransferase 1</fullName>
        <shortName evidence="2">GT1</shortName>
        <ecNumber evidence="1">2.4.1.-</ecNumber>
    </recommendedName>
</protein>
<dbReference type="EC" id="2.4.1.-" evidence="1"/>
<dbReference type="EMBL" id="JH725187">
    <property type="protein sequence ID" value="EJP62360.1"/>
    <property type="molecule type" value="Genomic_DNA"/>
</dbReference>
<dbReference type="RefSeq" id="XP_008602005.1">
    <property type="nucleotide sequence ID" value="XM_008603783.1"/>
</dbReference>
<dbReference type="SMR" id="J4VV61"/>
<dbReference type="STRING" id="655819.J4VV61"/>
<dbReference type="GeneID" id="19891698"/>
<dbReference type="HOGENOM" id="CLU_000537_4_1_1"/>
<dbReference type="InParanoid" id="J4VV61"/>
<dbReference type="OrthoDB" id="12615at474943"/>
<dbReference type="Proteomes" id="UP000002762">
    <property type="component" value="Unassembled WGS sequence"/>
</dbReference>
<dbReference type="GO" id="GO:0016758">
    <property type="term" value="F:hexosyltransferase activity"/>
    <property type="evidence" value="ECO:0007669"/>
    <property type="project" value="UniProtKB-ARBA"/>
</dbReference>
<dbReference type="GO" id="GO:0008194">
    <property type="term" value="F:UDP-glycosyltransferase activity"/>
    <property type="evidence" value="ECO:0007669"/>
    <property type="project" value="InterPro"/>
</dbReference>
<dbReference type="CDD" id="cd03784">
    <property type="entry name" value="GT1_Gtf-like"/>
    <property type="match status" value="1"/>
</dbReference>
<dbReference type="Gene3D" id="3.40.50.2000">
    <property type="entry name" value="Glycogen Phosphorylase B"/>
    <property type="match status" value="3"/>
</dbReference>
<dbReference type="InterPro" id="IPR010610">
    <property type="entry name" value="EryCIII-like_C"/>
</dbReference>
<dbReference type="InterPro" id="IPR002213">
    <property type="entry name" value="UDP_glucos_trans"/>
</dbReference>
<dbReference type="PANTHER" id="PTHR21015:SF22">
    <property type="entry name" value="GLYCOSYLTRANSFERASE"/>
    <property type="match status" value="1"/>
</dbReference>
<dbReference type="PANTHER" id="PTHR21015">
    <property type="entry name" value="UDP-N-ACETYLGLUCOSAMINE--N-ACETYLMURAMYL-(PENTAPEPTIDE) PYROPHOSPHORYL-UNDECAPRENOL N-ACETYLGLUCOSAMINE TRANSFERASE 1"/>
    <property type="match status" value="1"/>
</dbReference>
<dbReference type="Pfam" id="PF06722">
    <property type="entry name" value="EryCIII-like_C"/>
    <property type="match status" value="1"/>
</dbReference>
<dbReference type="SUPFAM" id="SSF53756">
    <property type="entry name" value="UDP-Glycosyltransferase/glycogen phosphorylase"/>
    <property type="match status" value="1"/>
</dbReference>
<comment type="function">
    <text evidence="1">UDP-glucosyltransferase; part of the pathway that mediates the biosynthesis of tenellin-type 2-pyridones, iron-chelating compounds involved in iron stress tolerance, competition with the natural competitor fungus Metarhizium robertsii and insect hosts infection (PubMed:34903054). Targets the N-OH hydroxyl residue of 15-hydroxytellenin (15-HT) to produce pyridovericin-N-O-(beta-D-glucopyranoside) which is further methylated by the methyltransferase MT1 to yield pyridovericin-N-O-(4-O-methyl-beta-D-glucopyranoside) (PMGP) (PubMed:34903054). The pathway begins with the assembly of the polyketide-amino acid backbone by the hybrid PKS-NRPS tenS with the help of the enoyl reductase tenC. These enzymes catalyze the synthesis of the pyrrolidine-2-dione intermediates pretellinin A, 11-hydropretellenin A, 12-hydropretellenin A, 13-hydropretellenin A, 14-hydropretellenin A, 12-oxopretellenin A and prototellinin D. The cytochrome P450 monooxygenase tenA then catalyzes an oxidative ring expansion of pretenellin A and 14-hydropretellenin A to form the 2-pyridone core, leading to pretenellin B and pyridovericin, respectively. The cytochrome P450 monooxygenase tenB is then required for the selective N-hydroxylation of the 2-pyridone nitrogen of yield tellinin and 15-hydroxytellenin (15-HT), respectively. The UDP-glucosyltransferase GT1 and the methyltransferase MT1, located outside the tenS gene cluster, contribute to the stepwise glycosylation and methylation of 15-HT to obtain the glycoside pyridovericin-N-O-(4-O-methyl-beta-D-glucopyranoside) (PMGP). Additional related compounds such as 1-O-methyl-15-HT, (8Z)-1-O-methyl-15-HT, and O-methyltenellin A are also produced but the enzymes involved in their biosynthesis have still to be determined (PubMed:34903054).</text>
</comment>
<comment type="pathway">
    <text evidence="1">Secondary metabolite biosynthesis.</text>
</comment>
<comment type="induction">
    <text evidence="1">Expression is positively regulated by the cluster-specific transcription factor tenR and is induced during cocultures with the natural competitor fungus Metarhizium robertsii.</text>
</comment>
<comment type="disruption phenotype">
    <text evidence="1">Impairs the production of detectable pyridovericin-N-O-(4-O-methyl-beta-D-glucopyranoside) (PMGP).</text>
</comment>
<comment type="similarity">
    <text evidence="3">Belongs to the UDP-glycosyltransferase family.</text>
</comment>
<keyword id="KW-0328">Glycosyltransferase</keyword>
<keyword id="KW-1185">Reference proteome</keyword>
<keyword id="KW-0808">Transferase</keyword>
<name>GT1_BEAB2</name>
<organism>
    <name type="scientific">Beauveria bassiana (strain ARSEF 2860)</name>
    <name type="common">White muscardine disease fungus</name>
    <name type="synonym">Tritirachium shiotae</name>
    <dbReference type="NCBI Taxonomy" id="655819"/>
    <lineage>
        <taxon>Eukaryota</taxon>
        <taxon>Fungi</taxon>
        <taxon>Dikarya</taxon>
        <taxon>Ascomycota</taxon>
        <taxon>Pezizomycotina</taxon>
        <taxon>Sordariomycetes</taxon>
        <taxon>Hypocreomycetidae</taxon>
        <taxon>Hypocreales</taxon>
        <taxon>Cordycipitaceae</taxon>
        <taxon>Beauveria</taxon>
    </lineage>
</organism>
<evidence type="ECO:0000269" key="1">
    <source>
    </source>
</evidence>
<evidence type="ECO:0000303" key="2">
    <source>
    </source>
</evidence>
<evidence type="ECO:0000305" key="3"/>